<name>SK1_DELRA</name>
<feature type="peptide" id="PRO_0000419735" description="Sulfakinin" evidence="3 4">
    <location>
        <begin position="1"/>
        <end position="14"/>
    </location>
</feature>
<feature type="peptide" id="PRO_0000419736" description="Sulfakinin(6-14)" evidence="3 4">
    <location>
        <begin position="6"/>
        <end position="14"/>
    </location>
</feature>
<feature type="modified residue" description="Phenylalanine amide" evidence="3 4">
    <location>
        <position position="14"/>
    </location>
</feature>
<comment type="function">
    <text evidence="1">Myotropic peptide.</text>
</comment>
<comment type="subcellular location">
    <subcellularLocation>
        <location evidence="1">Secreted</location>
    </subcellularLocation>
</comment>
<comment type="tissue specificity">
    <text evidence="3 4">In larvae, both sulfakinin and sulfakinin(6-14) are expressed in the CNS but not the ring gland, thoracic perisympathetic organs (tPSO) and abdominal perisympathetic organs (aPSO) (at protein level). In adults, both sulfakinin and sulfakinin(6-14) are expressed in the brain and thoracic-abdominal ganglion but not in corpora cardiaca and corpora allata (at protein level).</text>
</comment>
<comment type="developmental stage">
    <text evidence="3 4">Detected in larvae and adults.</text>
</comment>
<comment type="mass spectrometry" mass="1686.7" method="MALDI" evidence="3 4">
    <molecule>Sulfakinin</molecule>
</comment>
<comment type="mass spectrometry" mass="1686.68" method="MALDI" evidence="3 4">
    <molecule>Sulfakinin</molecule>
</comment>
<comment type="mass spectrometry" mass="1186.5" method="MALDI" evidence="3 4">
    <molecule>Sulfakinin(6-14)</molecule>
</comment>
<comment type="mass spectrometry" mass="1186.52" method="MALDI" evidence="3 4">
    <molecule>Sulfakinin(6-14)</molecule>
</comment>
<comment type="similarity">
    <text evidence="2">Belongs to the gastrin/cholecystokinin family.</text>
</comment>
<keyword id="KW-0027">Amidation</keyword>
<keyword id="KW-0903">Direct protein sequencing</keyword>
<keyword id="KW-0527">Neuropeptide</keyword>
<keyword id="KW-0964">Secreted</keyword>
<organism>
    <name type="scientific">Delia radicum</name>
    <name type="common">Cabbage root fly</name>
    <name type="synonym">Anthomyia brassicae</name>
    <dbReference type="NCBI Taxonomy" id="30064"/>
    <lineage>
        <taxon>Eukaryota</taxon>
        <taxon>Metazoa</taxon>
        <taxon>Ecdysozoa</taxon>
        <taxon>Arthropoda</taxon>
        <taxon>Hexapoda</taxon>
        <taxon>Insecta</taxon>
        <taxon>Pterygota</taxon>
        <taxon>Neoptera</taxon>
        <taxon>Endopterygota</taxon>
        <taxon>Diptera</taxon>
        <taxon>Brachycera</taxon>
        <taxon>Muscomorpha</taxon>
        <taxon>Muscoidea</taxon>
        <taxon>Anthomyiidae</taxon>
        <taxon>Anthomyiinae</taxon>
        <taxon>Delia</taxon>
    </lineage>
</organism>
<protein>
    <recommendedName>
        <fullName evidence="5 6">Sulfakinin</fullName>
    </recommendedName>
    <component>
        <recommendedName>
            <fullName evidence="5 6">Sulfakinin(6-14)</fullName>
        </recommendedName>
    </component>
</protein>
<evidence type="ECO:0000250" key="1">
    <source>
        <dbReference type="UniProtKB" id="P41493"/>
    </source>
</evidence>
<evidence type="ECO:0000255" key="2"/>
<evidence type="ECO:0000269" key="3">
    <source>
    </source>
</evidence>
<evidence type="ECO:0000269" key="4">
    <source>
    </source>
</evidence>
<evidence type="ECO:0000303" key="5">
    <source>
    </source>
</evidence>
<evidence type="ECO:0000303" key="6">
    <source>
    </source>
</evidence>
<evidence type="ECO:0000305" key="7"/>
<accession>B3EWM3</accession>
<accession>B3EWM4</accession>
<proteinExistence type="evidence at protein level"/>
<dbReference type="GO" id="GO:0005576">
    <property type="term" value="C:extracellular region"/>
    <property type="evidence" value="ECO:0007669"/>
    <property type="project" value="UniProtKB-SubCell"/>
</dbReference>
<dbReference type="GO" id="GO:0007218">
    <property type="term" value="P:neuropeptide signaling pathway"/>
    <property type="evidence" value="ECO:0007669"/>
    <property type="project" value="UniProtKB-KW"/>
</dbReference>
<dbReference type="InterPro" id="IPR013152">
    <property type="entry name" value="Gastrin/cholecystokinin_CS"/>
</dbReference>
<dbReference type="InterPro" id="IPR013259">
    <property type="entry name" value="Sulfakinin"/>
</dbReference>
<dbReference type="Pfam" id="PF08257">
    <property type="entry name" value="Sulfakinin"/>
    <property type="match status" value="1"/>
</dbReference>
<dbReference type="PROSITE" id="PS00259">
    <property type="entry name" value="GASTRIN"/>
    <property type="match status" value="1"/>
</dbReference>
<sequence length="14" mass="1688">GGEEQFDDYGHMRF</sequence>
<reference evidence="7" key="1">
    <citation type="journal article" date="2011" name="Peptides">
        <title>Neuropeptides associated with the central nervous system of the cabbage root fly, Delia radicum (L).</title>
        <authorList>
            <person name="Audsley N."/>
            <person name="Matthews H.J."/>
            <person name="Down R.E."/>
            <person name="Weaver R.J."/>
        </authorList>
    </citation>
    <scope>PROTEIN SEQUENCE</scope>
    <scope>TISSUE SPECIFICITY</scope>
    <scope>MASS SPECTROMETRY</scope>
    <scope>AMIDATION AT PHE-14</scope>
    <source>
        <tissue evidence="3">Abdominal ganglion</tissue>
        <tissue evidence="3">Brain</tissue>
    </source>
</reference>
<reference evidence="7" key="2">
    <citation type="journal article" date="2012" name="PLoS ONE">
        <title>Peptidomics of the agriculturally damaging larval stage of the cabbage root fly Delia radicum (Diptera: Anthomyiidae).</title>
        <authorList>
            <person name="Zoephel J."/>
            <person name="Reiher W."/>
            <person name="Rexer K.-H."/>
            <person name="Kahnt J."/>
            <person name="Wegener C."/>
        </authorList>
    </citation>
    <scope>PROTEIN SEQUENCE</scope>
    <scope>TISSUE SPECIFICITY</scope>
    <scope>DEVELOPMENTAL STAGE</scope>
    <scope>MASS SPECTROMETRY</scope>
    <scope>AMIDATION AT PHE-14</scope>
    <source>
        <tissue evidence="4">CNS</tissue>
    </source>
</reference>